<dbReference type="EC" id="3.2.2.5" evidence="6"/>
<dbReference type="EMBL" id="JZVV01000016">
    <property type="protein sequence ID" value="KLD05782.1"/>
    <property type="molecule type" value="Genomic_DNA"/>
</dbReference>
<dbReference type="RefSeq" id="WP_008573463.1">
    <property type="nucleotide sequence ID" value="NZ_WMCJ01000014.1"/>
</dbReference>
<dbReference type="SMR" id="P0DV29"/>
<dbReference type="GeneID" id="61777979"/>
<dbReference type="GO" id="GO:0005737">
    <property type="term" value="C:cytoplasm"/>
    <property type="evidence" value="ECO:0007669"/>
    <property type="project" value="UniProtKB-SubCell"/>
</dbReference>
<dbReference type="GO" id="GO:0050135">
    <property type="term" value="F:NADP+ nucleosidase activity"/>
    <property type="evidence" value="ECO:0007669"/>
    <property type="project" value="InterPro"/>
</dbReference>
<dbReference type="GO" id="GO:0000166">
    <property type="term" value="F:nucleotide binding"/>
    <property type="evidence" value="ECO:0007669"/>
    <property type="project" value="UniProtKB-KW"/>
</dbReference>
<dbReference type="GO" id="GO:0051607">
    <property type="term" value="P:defense response to virus"/>
    <property type="evidence" value="ECO:0007669"/>
    <property type="project" value="UniProtKB-KW"/>
</dbReference>
<dbReference type="CDD" id="cd00038">
    <property type="entry name" value="CAP_ED"/>
    <property type="match status" value="1"/>
</dbReference>
<dbReference type="Gene3D" id="2.60.120.10">
    <property type="entry name" value="Jelly Rolls"/>
    <property type="match status" value="1"/>
</dbReference>
<dbReference type="InterPro" id="IPR019302">
    <property type="entry name" value="CAP12/PCTIR_TIR_dom"/>
</dbReference>
<dbReference type="InterPro" id="IPR000595">
    <property type="entry name" value="cNMP-bd_dom"/>
</dbReference>
<dbReference type="InterPro" id="IPR018490">
    <property type="entry name" value="cNMP-bd_dom_sf"/>
</dbReference>
<dbReference type="InterPro" id="IPR014710">
    <property type="entry name" value="RmlC-like_jellyroll"/>
</dbReference>
<dbReference type="PANTHER" id="PTHR23011">
    <property type="entry name" value="CYCLIC NUCLEOTIDE-BINDING DOMAIN CONTAINING PROTEIN"/>
    <property type="match status" value="1"/>
</dbReference>
<dbReference type="PANTHER" id="PTHR23011:SF28">
    <property type="entry name" value="CYCLIC NUCLEOTIDE-BINDING DOMAIN CONTAINING PROTEIN"/>
    <property type="match status" value="1"/>
</dbReference>
<dbReference type="Pfam" id="PF10137">
    <property type="entry name" value="CAP12-PCTIR_TIR"/>
    <property type="match status" value="1"/>
</dbReference>
<dbReference type="Pfam" id="PF00027">
    <property type="entry name" value="cNMP_binding"/>
    <property type="match status" value="1"/>
</dbReference>
<dbReference type="SMART" id="SM00100">
    <property type="entry name" value="cNMP"/>
    <property type="match status" value="1"/>
</dbReference>
<dbReference type="SUPFAM" id="SSF51206">
    <property type="entry name" value="cAMP-binding domain-like"/>
    <property type="match status" value="1"/>
</dbReference>
<dbReference type="PROSITE" id="PS50042">
    <property type="entry name" value="CNMP_BINDING_3"/>
    <property type="match status" value="1"/>
</dbReference>
<organism>
    <name type="scientific">Xanthomonas perforans</name>
    <dbReference type="NCBI Taxonomy" id="442694"/>
    <lineage>
        <taxon>Bacteria</taxon>
        <taxon>Pseudomonadati</taxon>
        <taxon>Pseudomonadota</taxon>
        <taxon>Gammaproteobacteria</taxon>
        <taxon>Lysobacterales</taxon>
        <taxon>Lysobacteraceae</taxon>
        <taxon>Xanthomonas</taxon>
    </lineage>
</organism>
<evidence type="ECO:0000255" key="1">
    <source>
        <dbReference type="PROSITE-ProRule" id="PRU00060"/>
    </source>
</evidence>
<evidence type="ECO:0000269" key="2">
    <source>
    </source>
</evidence>
<evidence type="ECO:0000303" key="3">
    <source>
    </source>
</evidence>
<evidence type="ECO:0000303" key="4">
    <source>
    </source>
</evidence>
<evidence type="ECO:0000305" key="5"/>
<evidence type="ECO:0000305" key="6">
    <source>
    </source>
</evidence>
<gene>
    <name evidence="4" type="primary">pycTIR</name>
    <name evidence="3" type="ORF">GEV1001_09740</name>
</gene>
<comment type="function">
    <text evidence="2">Pycsar (pyrimidine cyclase system for antiphage resistance) provides immunity against bacteriophage. The pyrimidine cyclase (PycC) synthesizes cyclic nucleotides in response to infection; these serve as specific second messenger signals. The signals activate the adjacent effector, leading to bacterial cell death and abortive phage infection. A clade B Pycsar system.</text>
</comment>
<comment type="function">
    <text evidence="2 6">The effector gene of a two-gene Pycsar system. Expression of this and adjacent uridylate cyclase XpPycC (AC P0DV28) confers resistance to bacteriophage T7. When cells expressing the Pycsar system are infected by phage T7 at low multiplicity of infection (0.2 MOI) the culture survivey, at 2.0 MOI bacteria enter growth arrest. The same cells enter growth arrest after exposure to 2.5 mM cUMP but not cCMP; the effector protein responds only to the cUMP usually produced by its cognate NTP cyclase. NAD(+) levels in infected cells are depleted between 5 and 10 minutes after infection with T7 at MOI of 2 (PubMed:34644530). Probably only responds to cUMP (Probable).</text>
</comment>
<comment type="catalytic activity">
    <reaction evidence="6">
        <text>NAD(+) + H2O = ADP-D-ribose + nicotinamide + H(+)</text>
        <dbReference type="Rhea" id="RHEA:16301"/>
        <dbReference type="ChEBI" id="CHEBI:15377"/>
        <dbReference type="ChEBI" id="CHEBI:15378"/>
        <dbReference type="ChEBI" id="CHEBI:17154"/>
        <dbReference type="ChEBI" id="CHEBI:57540"/>
        <dbReference type="ChEBI" id="CHEBI:57967"/>
        <dbReference type="EC" id="3.2.2.5"/>
    </reaction>
</comment>
<comment type="subcellular location">
    <subcellularLocation>
        <location evidence="5">Cytoplasm</location>
    </subcellularLocation>
</comment>
<comment type="induction">
    <text evidence="2">In E.coli strain MG1655 transformed with both genes NAD(+) levels fall dramatically by 10 minutes after infection with phage T7 (at protein level).</text>
</comment>
<comment type="domain">
    <text evidence="5">Has an N-terminal cyclic nucleotide-binding domain and a C-terminal Toll/interleukin-1 receptor-like domain (TIR) that probably has the NAD(+) hydrolase activity.</text>
</comment>
<name>PCTIR_XANPE</name>
<accession>P0DV29</accession>
<feature type="chain" id="PRO_0000455241" description="Pycsar effector protein XpPycTIR">
    <location>
        <begin position="1"/>
        <end position="303"/>
    </location>
</feature>
<feature type="region of interest" description="TIR-like" evidence="6">
    <location>
        <begin position="154"/>
        <end position="273"/>
    </location>
</feature>
<feature type="binding site" evidence="1">
    <location>
        <begin position="14"/>
        <end position="138"/>
    </location>
    <ligand>
        <name>a nucleoside 3',5'-cyclic phosphate</name>
        <dbReference type="ChEBI" id="CHEBI:58464"/>
    </ligand>
</feature>
<keyword id="KW-0051">Antiviral defense</keyword>
<keyword id="KW-0963">Cytoplasm</keyword>
<keyword id="KW-0378">Hydrolase</keyword>
<keyword id="KW-0547">Nucleotide-binding</keyword>
<protein>
    <recommendedName>
        <fullName>Pycsar effector protein XpPycTIR</fullName>
        <shortName evidence="4">XpPycTIR</shortName>
        <ecNumber evidence="6">3.2.2.5</ecNumber>
    </recommendedName>
    <alternativeName>
        <fullName>NAD(+) hydrolase</fullName>
    </alternativeName>
</protein>
<proteinExistence type="evidence at protein level"/>
<reference key="1">
    <citation type="journal article" date="2015" name="Front. Microbiol.">
        <title>Phylogenomics of Xanthomonas field strains infecting pepper and tomato reveals diversity in effector repertoires and identifies determinants of host specificity.</title>
        <authorList>
            <person name="Schwartz A.R."/>
            <person name="Potnis N."/>
            <person name="Timilsina S."/>
            <person name="Wilson M."/>
            <person name="Patane J."/>
            <person name="Martins J. Jr."/>
            <person name="Minsavage G.V."/>
            <person name="Dahlbeck D."/>
            <person name="Akhunova A."/>
            <person name="Almeida N."/>
            <person name="Vallad G.E."/>
            <person name="Barak J.D."/>
            <person name="White F.F."/>
            <person name="Miller S.A."/>
            <person name="Ritchie D."/>
            <person name="Goss E."/>
            <person name="Bart R.S."/>
            <person name="Setubal J.C."/>
            <person name="Jones J.B."/>
            <person name="Staskawicz B.J."/>
        </authorList>
    </citation>
    <scope>NUCLEOTIDE SEQUENCE [LARGE SCALE GENOMIC DNA]</scope>
    <source>
        <strain>GEV1001</strain>
    </source>
</reference>
<reference key="2">
    <citation type="journal article" date="2021" name="Cell">
        <title>Cyclic CMP and cyclic UMP mediate bacterial immunity against phages.</title>
        <authorList>
            <person name="Tal N."/>
            <person name="Morehouse B.R."/>
            <person name="Millman A."/>
            <person name="Stokar-Avihail A."/>
            <person name="Avraham C."/>
            <person name="Fedorenko T."/>
            <person name="Yirmiya E."/>
            <person name="Herbst E."/>
            <person name="Brandis A."/>
            <person name="Mehlman T."/>
            <person name="Oppenheimer-Shaanan Y."/>
            <person name="Keszei A.F.A."/>
            <person name="Shao S."/>
            <person name="Amitai G."/>
            <person name="Kranzusch P.J."/>
            <person name="Sorek R."/>
        </authorList>
    </citation>
    <scope>FUNCTION AS AN NAD HYDROLASE</scope>
    <scope>ANTIVIRAL DEFENSE</scope>
    <scope>INDUCTION</scope>
    <scope>CLASSIFICATION</scope>
    <source>
        <strain>GEV1001</strain>
    </source>
</reference>
<sequence>MIERFQGDEGRRRLVATLTEHRLVANRQELAERLVAVGELMEAPAGTTFINQGDQTSEVFFIIAGKVEVRVNGKVVANRFPGDSVGEMAAIEPSQPRAASVIPVEDTVLIKVSEAEFSAAAEQFPDVWRRIAATLARRLAERNHLVTAQRERVRVFIMSSVEALPIVDLLIKQFAHDPFLAVAWKNGVFRASQYTLDELEAELDDSDFAVAVAHGDDVLITRDDEWPTIRDNVILEFGLFMGRLGRRRAFLMEPRDVDLKLPSDLAGLTTIPYRYVKGKDAEHYIAPACARLRELILAAGAKD</sequence>